<dbReference type="EMBL" id="BC079724">
    <property type="protein sequence ID" value="AAH79724.1"/>
    <property type="molecule type" value="mRNA"/>
</dbReference>
<dbReference type="RefSeq" id="NP_001090243.1">
    <property type="nucleotide sequence ID" value="NM_001096774.1"/>
</dbReference>
<dbReference type="SMR" id="Q68FK4"/>
<dbReference type="DNASU" id="779148"/>
<dbReference type="AGR" id="Xenbase:XB-GENE-866242"/>
<dbReference type="Xenbase" id="XB-GENE-866242">
    <property type="gene designation" value="armc8.L"/>
</dbReference>
<dbReference type="OrthoDB" id="5559898at2759"/>
<dbReference type="Proteomes" id="UP000186698">
    <property type="component" value="Unplaced"/>
</dbReference>
<dbReference type="Bgee" id="779148">
    <property type="expression patterns" value="Expressed in muscle tissue and 19 other cell types or tissues"/>
</dbReference>
<dbReference type="GO" id="GO:0005737">
    <property type="term" value="C:cytoplasm"/>
    <property type="evidence" value="ECO:0000250"/>
    <property type="project" value="UniProtKB"/>
</dbReference>
<dbReference type="GO" id="GO:0034657">
    <property type="term" value="C:GID complex"/>
    <property type="evidence" value="ECO:0000318"/>
    <property type="project" value="GO_Central"/>
</dbReference>
<dbReference type="GO" id="GO:0005634">
    <property type="term" value="C:nucleus"/>
    <property type="evidence" value="ECO:0000250"/>
    <property type="project" value="UniProtKB"/>
</dbReference>
<dbReference type="GO" id="GO:0000151">
    <property type="term" value="C:ubiquitin ligase complex"/>
    <property type="evidence" value="ECO:0000250"/>
    <property type="project" value="UniProtKB"/>
</dbReference>
<dbReference type="GO" id="GO:0030901">
    <property type="term" value="P:midbrain development"/>
    <property type="evidence" value="ECO:0000314"/>
    <property type="project" value="Xenbase"/>
</dbReference>
<dbReference type="GO" id="GO:0061351">
    <property type="term" value="P:neural precursor cell proliferation"/>
    <property type="evidence" value="ECO:0000315"/>
    <property type="project" value="Xenbase"/>
</dbReference>
<dbReference type="GO" id="GO:0030182">
    <property type="term" value="P:neuron differentiation"/>
    <property type="evidence" value="ECO:0000315"/>
    <property type="project" value="Xenbase"/>
</dbReference>
<dbReference type="GO" id="GO:0043161">
    <property type="term" value="P:proteasome-mediated ubiquitin-dependent protein catabolic process"/>
    <property type="evidence" value="ECO:0000318"/>
    <property type="project" value="GO_Central"/>
</dbReference>
<dbReference type="FunFam" id="1.25.10.10:FF:000061">
    <property type="entry name" value="armadillo repeat-containing protein 8 isoform X1"/>
    <property type="match status" value="1"/>
</dbReference>
<dbReference type="FunFam" id="1.25.10.10:FF:000070">
    <property type="entry name" value="armadillo repeat-containing protein 8 isoform X1"/>
    <property type="match status" value="1"/>
</dbReference>
<dbReference type="Gene3D" id="1.25.10.10">
    <property type="entry name" value="Leucine-rich Repeat Variant"/>
    <property type="match status" value="3"/>
</dbReference>
<dbReference type="InterPro" id="IPR011989">
    <property type="entry name" value="ARM-like"/>
</dbReference>
<dbReference type="InterPro" id="IPR016024">
    <property type="entry name" value="ARM-type_fold"/>
</dbReference>
<dbReference type="InterPro" id="IPR000225">
    <property type="entry name" value="Armadillo"/>
</dbReference>
<dbReference type="InterPro" id="IPR038739">
    <property type="entry name" value="ARMC8/Vid28"/>
</dbReference>
<dbReference type="PANTHER" id="PTHR15651">
    <property type="entry name" value="ARMADILLO REPEAT-CONTAINING PROTEIN 8"/>
    <property type="match status" value="1"/>
</dbReference>
<dbReference type="PANTHER" id="PTHR15651:SF7">
    <property type="entry name" value="ARMADILLO REPEAT-CONTAINING PROTEIN 8"/>
    <property type="match status" value="1"/>
</dbReference>
<dbReference type="Pfam" id="PF00514">
    <property type="entry name" value="Arm"/>
    <property type="match status" value="1"/>
</dbReference>
<dbReference type="SMART" id="SM00185">
    <property type="entry name" value="ARM"/>
    <property type="match status" value="8"/>
</dbReference>
<dbReference type="SUPFAM" id="SSF48371">
    <property type="entry name" value="ARM repeat"/>
    <property type="match status" value="1"/>
</dbReference>
<dbReference type="PROSITE" id="PS50176">
    <property type="entry name" value="ARM_REPEAT"/>
    <property type="match status" value="1"/>
</dbReference>
<sequence>MACVLEPPLRMSVLSEVTASSRHYVDRLFDPDPQKVLQGVIDMKNAVIGNNKQKANLIVLGAVPRLLYLLQQETSSTELKTECAVVLGSLSMGTENNVKSLLDCNIIPALLQGLLSSDLQFIEACLRCLRTVFTSPVTPVELLYTDASVIPHLMLLLSRSIYAQEYICQIYAHCCKGPDHQTILFNHGVVQNIAHLLTSVSYKVRMQALKCFSVLAFDNPQVSMTLANVLVDGELLPQIFAKMLQRDKPIEMQLTAAKCLTYMCRAGSIRTDDNCIVLKTLPCLVRMCSKERLLEVRVEGAETLAYLIEPDVELQRIASITDHLISMLADYFKYPSSVSAITDIKRHQETGQPCIDPEEAEPRGTRDESQCTALSISHPVSQIQHDCLLTSEELDHDLKHAHELRQAAFKLYASLGANDEDIRKKIIEAEHMMDRIVNGLSETSVKVRLAAVRCLHSLSRSVQQLRTSFQDHAVWKPLMKVLQNAPDDILVVASSTLCNLLLEFSPSKEPILESGAVELLCSLTLSENPALRVNGIWALMNMAFQADQKIKSDILRGLSTEQLFQLLSDSDVNVLMKTLGLLRNLLSTRPHIDQIMSTHGKQIMQAVTFILEGEHNIEVKEQTLCILANIADGTTAKDLIMTNDDILQKIKYYVGHSNLKLQLAAMFCIANLTWNEEEGSQERQDKLREIGIVDILHKLSQSTDPNLCDKAKTALQQYFA</sequence>
<name>ARMC8_XENLA</name>
<keyword id="KW-0963">Cytoplasm</keyword>
<keyword id="KW-0539">Nucleus</keyword>
<keyword id="KW-1185">Reference proteome</keyword>
<keyword id="KW-0677">Repeat</keyword>
<protein>
    <recommendedName>
        <fullName>Armadillo repeat-containing protein 8</fullName>
    </recommendedName>
</protein>
<evidence type="ECO:0000250" key="1">
    <source>
        <dbReference type="UniProtKB" id="Q8IUR7"/>
    </source>
</evidence>
<organism>
    <name type="scientific">Xenopus laevis</name>
    <name type="common">African clawed frog</name>
    <dbReference type="NCBI Taxonomy" id="8355"/>
    <lineage>
        <taxon>Eukaryota</taxon>
        <taxon>Metazoa</taxon>
        <taxon>Chordata</taxon>
        <taxon>Craniata</taxon>
        <taxon>Vertebrata</taxon>
        <taxon>Euteleostomi</taxon>
        <taxon>Amphibia</taxon>
        <taxon>Batrachia</taxon>
        <taxon>Anura</taxon>
        <taxon>Pipoidea</taxon>
        <taxon>Pipidae</taxon>
        <taxon>Xenopodinae</taxon>
        <taxon>Xenopus</taxon>
        <taxon>Xenopus</taxon>
    </lineage>
</organism>
<reference key="1">
    <citation type="submission" date="2004-08" db="EMBL/GenBank/DDBJ databases">
        <authorList>
            <consortium name="NIH - Xenopus Gene Collection (XGC) project"/>
        </authorList>
    </citation>
    <scope>NUCLEOTIDE SEQUENCE [LARGE SCALE MRNA]</scope>
    <source>
        <tissue>Embryo</tissue>
    </source>
</reference>
<feature type="chain" id="PRO_0000284413" description="Armadillo repeat-containing protein 8">
    <location>
        <begin position="1"/>
        <end position="720"/>
    </location>
</feature>
<feature type="repeat" description="ARM 1">
    <location>
        <begin position="51"/>
        <end position="92"/>
    </location>
</feature>
<feature type="repeat" description="ARM 2">
    <location>
        <begin position="95"/>
        <end position="134"/>
    </location>
</feature>
<feature type="repeat" description="ARM 3">
    <location>
        <begin position="138"/>
        <end position="176"/>
    </location>
</feature>
<feature type="repeat" description="ARM 4">
    <location>
        <begin position="178"/>
        <end position="217"/>
    </location>
</feature>
<feature type="repeat" description="ARM 5">
    <location>
        <begin position="224"/>
        <end position="265"/>
    </location>
</feature>
<feature type="repeat" description="ARM 6">
    <location>
        <begin position="269"/>
        <end position="309"/>
    </location>
</feature>
<feature type="repeat" description="ARM 7">
    <location>
        <begin position="313"/>
        <end position="352"/>
    </location>
</feature>
<feature type="repeat" description="ARM 8">
    <location>
        <begin position="421"/>
        <end position="460"/>
    </location>
</feature>
<feature type="repeat" description="ARM 9">
    <location>
        <begin position="463"/>
        <end position="502"/>
    </location>
</feature>
<feature type="repeat" description="ARM 10">
    <location>
        <begin position="505"/>
        <end position="544"/>
    </location>
</feature>
<feature type="repeat" description="ARM 11">
    <location>
        <begin position="548"/>
        <end position="587"/>
    </location>
</feature>
<feature type="repeat" description="ARM 12">
    <location>
        <begin position="590"/>
        <end position="632"/>
    </location>
</feature>
<feature type="repeat" description="ARM 13">
    <location>
        <begin position="635"/>
        <end position="674"/>
    </location>
</feature>
<feature type="repeat" description="ARM 14">
    <location>
        <begin position="681"/>
        <end position="720"/>
    </location>
</feature>
<accession>Q68FK4</accession>
<gene>
    <name type="primary">armc8</name>
</gene>
<comment type="function">
    <text evidence="1">Component of the CTLH E3 ubiquitin-protein ligase complex that mediates ubiquitination and subsequent proteasomal degradation of target proteins.</text>
</comment>
<comment type="subunit">
    <text evidence="1">Identified in the CTLH complex that contains at least MAEA, RMND5A (or alternatively its paralog RMND5B), GID8, WDR26, and RANBP9 and/or RANBP10; ARMC8 has an ancillary role in the complex.</text>
</comment>
<comment type="subcellular location">
    <subcellularLocation>
        <location evidence="1">Nucleus</location>
    </subcellularLocation>
    <subcellularLocation>
        <location evidence="1">Cytoplasm</location>
    </subcellularLocation>
</comment>
<proteinExistence type="evidence at transcript level"/>